<feature type="chain" id="PRO_1000025089" description="UDP-2,3-diacylglucosamine hydrolase">
    <location>
        <begin position="1"/>
        <end position="241"/>
    </location>
</feature>
<feature type="binding site" evidence="1">
    <location>
        <position position="8"/>
    </location>
    <ligand>
        <name>Mn(2+)</name>
        <dbReference type="ChEBI" id="CHEBI:29035"/>
        <label>1</label>
    </ligand>
</feature>
<feature type="binding site" evidence="1">
    <location>
        <position position="10"/>
    </location>
    <ligand>
        <name>Mn(2+)</name>
        <dbReference type="ChEBI" id="CHEBI:29035"/>
        <label>1</label>
    </ligand>
</feature>
<feature type="binding site" evidence="1">
    <location>
        <position position="41"/>
    </location>
    <ligand>
        <name>Mn(2+)</name>
        <dbReference type="ChEBI" id="CHEBI:29035"/>
        <label>1</label>
    </ligand>
</feature>
<feature type="binding site" evidence="1">
    <location>
        <position position="41"/>
    </location>
    <ligand>
        <name>Mn(2+)</name>
        <dbReference type="ChEBI" id="CHEBI:29035"/>
        <label>2</label>
    </ligand>
</feature>
<feature type="binding site" evidence="1">
    <location>
        <begin position="78"/>
        <end position="79"/>
    </location>
    <ligand>
        <name>substrate</name>
    </ligand>
</feature>
<feature type="binding site" evidence="1">
    <location>
        <position position="78"/>
    </location>
    <ligand>
        <name>Mn(2+)</name>
        <dbReference type="ChEBI" id="CHEBI:29035"/>
        <label>2</label>
    </ligand>
</feature>
<feature type="binding site" evidence="1">
    <location>
        <position position="113"/>
    </location>
    <ligand>
        <name>Mn(2+)</name>
        <dbReference type="ChEBI" id="CHEBI:29035"/>
        <label>2</label>
    </ligand>
</feature>
<feature type="binding site" evidence="1">
    <location>
        <position position="121"/>
    </location>
    <ligand>
        <name>substrate</name>
    </ligand>
</feature>
<feature type="binding site" evidence="1">
    <location>
        <position position="159"/>
    </location>
    <ligand>
        <name>substrate</name>
    </ligand>
</feature>
<feature type="binding site" evidence="1">
    <location>
        <position position="163"/>
    </location>
    <ligand>
        <name>substrate</name>
    </ligand>
</feature>
<feature type="binding site" evidence="1">
    <location>
        <position position="166"/>
    </location>
    <ligand>
        <name>substrate</name>
    </ligand>
</feature>
<feature type="binding site" evidence="1">
    <location>
        <position position="194"/>
    </location>
    <ligand>
        <name>Mn(2+)</name>
        <dbReference type="ChEBI" id="CHEBI:29035"/>
        <label>2</label>
    </ligand>
</feature>
<feature type="binding site" evidence="1">
    <location>
        <position position="194"/>
    </location>
    <ligand>
        <name>substrate</name>
    </ligand>
</feature>
<feature type="binding site" evidence="1">
    <location>
        <position position="196"/>
    </location>
    <ligand>
        <name>Mn(2+)</name>
        <dbReference type="ChEBI" id="CHEBI:29035"/>
        <label>1</label>
    </ligand>
</feature>
<gene>
    <name evidence="1" type="primary">lpxH</name>
    <name type="ordered locus">Sputw3181_2616</name>
</gene>
<proteinExistence type="inferred from homology"/>
<sequence length="241" mass="27124">MRTLFIGDLHLSADRLDITQAFTHFLDTELDDADALYILGDLFEVWVGDDIAAPFALELANKLKQVSLKLPVYFIHGNRDFMLGKQFARAAGMQILPEVTCLNLYGVKTVILHGDSLCTLDKAYQRFRKLRSLALARWLYGCLSKKTRQGIADNIRSKSKSSNKHKSYTIMDVEPNAVNALLARTHAQYMIHGHTHRPAIHQLDNGCKRIVVGDWYQQGSVLSVSPQGIDLQSLPFSPQQD</sequence>
<comment type="function">
    <text evidence="1">Hydrolyzes the pyrophosphate bond of UDP-2,3-diacylglucosamine to yield 2,3-diacylglucosamine 1-phosphate (lipid X) and UMP by catalyzing the attack of water at the alpha-P atom. Involved in the biosynthesis of lipid A, a phosphorylated glycolipid that anchors the lipopolysaccharide to the outer membrane of the cell.</text>
</comment>
<comment type="catalytic activity">
    <reaction evidence="1">
        <text>UDP-2-N,3-O-bis[(3R)-3-hydroxytetradecanoyl]-alpha-D-glucosamine + H2O = 2-N,3-O-bis[(3R)-3-hydroxytetradecanoyl]-alpha-D-glucosaminyl 1-phosphate + UMP + 2 H(+)</text>
        <dbReference type="Rhea" id="RHEA:25213"/>
        <dbReference type="ChEBI" id="CHEBI:15377"/>
        <dbReference type="ChEBI" id="CHEBI:15378"/>
        <dbReference type="ChEBI" id="CHEBI:57865"/>
        <dbReference type="ChEBI" id="CHEBI:57957"/>
        <dbReference type="ChEBI" id="CHEBI:78847"/>
        <dbReference type="EC" id="3.6.1.54"/>
    </reaction>
</comment>
<comment type="cofactor">
    <cofactor evidence="1">
        <name>Mn(2+)</name>
        <dbReference type="ChEBI" id="CHEBI:29035"/>
    </cofactor>
    <text evidence="1">Binds 2 Mn(2+) ions per subunit in a binuclear metal center.</text>
</comment>
<comment type="pathway">
    <text evidence="1">Glycolipid biosynthesis; lipid IV(A) biosynthesis; lipid IV(A) from (3R)-3-hydroxytetradecanoyl-[acyl-carrier-protein] and UDP-N-acetyl-alpha-D-glucosamine: step 4/6.</text>
</comment>
<comment type="subcellular location">
    <subcellularLocation>
        <location evidence="1">Cell inner membrane</location>
        <topology evidence="1">Peripheral membrane protein</topology>
        <orientation evidence="1">Cytoplasmic side</orientation>
    </subcellularLocation>
</comment>
<comment type="similarity">
    <text evidence="1">Belongs to the LpxH family.</text>
</comment>
<evidence type="ECO:0000255" key="1">
    <source>
        <dbReference type="HAMAP-Rule" id="MF_00575"/>
    </source>
</evidence>
<keyword id="KW-0997">Cell inner membrane</keyword>
<keyword id="KW-1003">Cell membrane</keyword>
<keyword id="KW-0378">Hydrolase</keyword>
<keyword id="KW-0441">Lipid A biosynthesis</keyword>
<keyword id="KW-0444">Lipid biosynthesis</keyword>
<keyword id="KW-0443">Lipid metabolism</keyword>
<keyword id="KW-0464">Manganese</keyword>
<keyword id="KW-0472">Membrane</keyword>
<keyword id="KW-0479">Metal-binding</keyword>
<protein>
    <recommendedName>
        <fullName evidence="1">UDP-2,3-diacylglucosamine hydrolase</fullName>
        <ecNumber evidence="1">3.6.1.54</ecNumber>
    </recommendedName>
    <alternativeName>
        <fullName evidence="1">UDP-2,3-diacylglucosamine diphosphatase</fullName>
    </alternativeName>
</protein>
<dbReference type="EC" id="3.6.1.54" evidence="1"/>
<dbReference type="EMBL" id="CP000503">
    <property type="protein sequence ID" value="ABM25439.1"/>
    <property type="molecule type" value="Genomic_DNA"/>
</dbReference>
<dbReference type="RefSeq" id="WP_011789896.1">
    <property type="nucleotide sequence ID" value="NC_008750.1"/>
</dbReference>
<dbReference type="SMR" id="A1RL94"/>
<dbReference type="KEGG" id="shw:Sputw3181_2616"/>
<dbReference type="HOGENOM" id="CLU_074586_0_0_6"/>
<dbReference type="UniPathway" id="UPA00359">
    <property type="reaction ID" value="UER00480"/>
</dbReference>
<dbReference type="Proteomes" id="UP000002597">
    <property type="component" value="Chromosome"/>
</dbReference>
<dbReference type="GO" id="GO:0005737">
    <property type="term" value="C:cytoplasm"/>
    <property type="evidence" value="ECO:0007669"/>
    <property type="project" value="InterPro"/>
</dbReference>
<dbReference type="GO" id="GO:0019897">
    <property type="term" value="C:extrinsic component of plasma membrane"/>
    <property type="evidence" value="ECO:0007669"/>
    <property type="project" value="UniProtKB-UniRule"/>
</dbReference>
<dbReference type="GO" id="GO:0030145">
    <property type="term" value="F:manganese ion binding"/>
    <property type="evidence" value="ECO:0007669"/>
    <property type="project" value="UniProtKB-UniRule"/>
</dbReference>
<dbReference type="GO" id="GO:0008758">
    <property type="term" value="F:UDP-2,3-diacylglucosamine hydrolase activity"/>
    <property type="evidence" value="ECO:0007669"/>
    <property type="project" value="UniProtKB-UniRule"/>
</dbReference>
<dbReference type="GO" id="GO:0009245">
    <property type="term" value="P:lipid A biosynthetic process"/>
    <property type="evidence" value="ECO:0007669"/>
    <property type="project" value="UniProtKB-UniRule"/>
</dbReference>
<dbReference type="CDD" id="cd07398">
    <property type="entry name" value="MPP_YbbF-LpxH"/>
    <property type="match status" value="1"/>
</dbReference>
<dbReference type="Gene3D" id="3.60.21.10">
    <property type="match status" value="1"/>
</dbReference>
<dbReference type="HAMAP" id="MF_00575">
    <property type="entry name" value="LpxH"/>
    <property type="match status" value="1"/>
</dbReference>
<dbReference type="InterPro" id="IPR004843">
    <property type="entry name" value="Calcineurin-like_PHP_ApaH"/>
</dbReference>
<dbReference type="InterPro" id="IPR043461">
    <property type="entry name" value="LpxH-like"/>
</dbReference>
<dbReference type="InterPro" id="IPR029052">
    <property type="entry name" value="Metallo-depent_PP-like"/>
</dbReference>
<dbReference type="InterPro" id="IPR010138">
    <property type="entry name" value="UDP-diacylglucosamine_Hdrlase"/>
</dbReference>
<dbReference type="NCBIfam" id="TIGR01854">
    <property type="entry name" value="lipid_A_lpxH"/>
    <property type="match status" value="1"/>
</dbReference>
<dbReference type="NCBIfam" id="NF003743">
    <property type="entry name" value="PRK05340.1"/>
    <property type="match status" value="1"/>
</dbReference>
<dbReference type="PANTHER" id="PTHR34990:SF1">
    <property type="entry name" value="UDP-2,3-DIACYLGLUCOSAMINE HYDROLASE"/>
    <property type="match status" value="1"/>
</dbReference>
<dbReference type="PANTHER" id="PTHR34990">
    <property type="entry name" value="UDP-2,3-DIACYLGLUCOSAMINE HYDROLASE-RELATED"/>
    <property type="match status" value="1"/>
</dbReference>
<dbReference type="Pfam" id="PF00149">
    <property type="entry name" value="Metallophos"/>
    <property type="match status" value="1"/>
</dbReference>
<dbReference type="SUPFAM" id="SSF56300">
    <property type="entry name" value="Metallo-dependent phosphatases"/>
    <property type="match status" value="1"/>
</dbReference>
<organism>
    <name type="scientific">Shewanella sp. (strain W3-18-1)</name>
    <dbReference type="NCBI Taxonomy" id="351745"/>
    <lineage>
        <taxon>Bacteria</taxon>
        <taxon>Pseudomonadati</taxon>
        <taxon>Pseudomonadota</taxon>
        <taxon>Gammaproteobacteria</taxon>
        <taxon>Alteromonadales</taxon>
        <taxon>Shewanellaceae</taxon>
        <taxon>Shewanella</taxon>
    </lineage>
</organism>
<name>LPXH_SHESW</name>
<accession>A1RL94</accession>
<reference key="1">
    <citation type="submission" date="2006-12" db="EMBL/GenBank/DDBJ databases">
        <title>Complete sequence of Shewanella sp. W3-18-1.</title>
        <authorList>
            <consortium name="US DOE Joint Genome Institute"/>
            <person name="Copeland A."/>
            <person name="Lucas S."/>
            <person name="Lapidus A."/>
            <person name="Barry K."/>
            <person name="Detter J.C."/>
            <person name="Glavina del Rio T."/>
            <person name="Hammon N."/>
            <person name="Israni S."/>
            <person name="Dalin E."/>
            <person name="Tice H."/>
            <person name="Pitluck S."/>
            <person name="Chain P."/>
            <person name="Malfatti S."/>
            <person name="Shin M."/>
            <person name="Vergez L."/>
            <person name="Schmutz J."/>
            <person name="Larimer F."/>
            <person name="Land M."/>
            <person name="Hauser L."/>
            <person name="Kyrpides N."/>
            <person name="Lykidis A."/>
            <person name="Tiedje J."/>
            <person name="Richardson P."/>
        </authorList>
    </citation>
    <scope>NUCLEOTIDE SEQUENCE [LARGE SCALE GENOMIC DNA]</scope>
    <source>
        <strain>W3-18-1</strain>
    </source>
</reference>